<sequence length="89" mass="10111">AETRNFALRDKKGNEIGVFTGKQPRQAALKAANRGHKDIRLRERGTKKVHIFAGERVKVKKPKGAPAWMPNEIWKPKVKKIGVEKLDEI</sequence>
<protein>
    <recommendedName>
        <fullName>Chromosomal protein MC1a</fullName>
    </recommendedName>
</protein>
<name>HMC1A_METSH</name>
<dbReference type="PIR" id="A34455">
    <property type="entry name" value="A34455"/>
</dbReference>
<dbReference type="SMR" id="P15249"/>
<dbReference type="OMA" id="NAPAWIQ"/>
<dbReference type="GO" id="GO:0003677">
    <property type="term" value="F:DNA binding"/>
    <property type="evidence" value="ECO:0007669"/>
    <property type="project" value="UniProtKB-KW"/>
</dbReference>
<dbReference type="GO" id="GO:0042262">
    <property type="term" value="P:DNA protection"/>
    <property type="evidence" value="ECO:0007669"/>
    <property type="project" value="InterPro"/>
</dbReference>
<dbReference type="Gene3D" id="3.10.470.10">
    <property type="entry name" value="Chromosomal protein MC1"/>
    <property type="match status" value="1"/>
</dbReference>
<dbReference type="InterPro" id="IPR008674">
    <property type="entry name" value="MC1"/>
</dbReference>
<dbReference type="InterPro" id="IPR036620">
    <property type="entry name" value="MC1_sf"/>
</dbReference>
<dbReference type="Pfam" id="PF05854">
    <property type="entry name" value="MC1"/>
    <property type="match status" value="1"/>
</dbReference>
<dbReference type="SUPFAM" id="SSF102875">
    <property type="entry name" value="Chromosomal protein MC1"/>
    <property type="match status" value="1"/>
</dbReference>
<feature type="chain" id="PRO_0000083999" description="Chromosomal protein MC1a">
    <location>
        <begin position="1"/>
        <end position="89"/>
    </location>
</feature>
<proteinExistence type="evidence at protein level"/>
<organism>
    <name type="scientific">Methanothrix soehngenii</name>
    <name type="common">Methanosaeta concilii</name>
    <dbReference type="NCBI Taxonomy" id="2223"/>
    <lineage>
        <taxon>Archaea</taxon>
        <taxon>Methanobacteriati</taxon>
        <taxon>Methanobacteriota</taxon>
        <taxon>Stenosarchaea group</taxon>
        <taxon>Methanomicrobia</taxon>
        <taxon>Methanotrichales</taxon>
        <taxon>Methanotrichaceae</taxon>
        <taxon>Methanothrix</taxon>
    </lineage>
</organism>
<keyword id="KW-0903">Direct protein sequencing</keyword>
<keyword id="KW-0238">DNA-binding</keyword>
<accession>P15249</accession>
<comment type="function">
    <text>Protects DNA against thermal denaturation and modulates transcription.</text>
</comment>
<reference key="1">
    <citation type="journal article" date="1989" name="J. Biol. Chem.">
        <title>Primary structure of the chromosomal proteins MC1a, MC1b, and MC1c from the archaebacterium Methanothrix soehngenii.</title>
        <authorList>
            <person name="Chartier F."/>
            <person name="Laine B."/>
            <person name="Belaiche D."/>
            <person name="Sautiere P."/>
        </authorList>
    </citation>
    <scope>PROTEIN SEQUENCE</scope>
</reference>